<name>ZOT_VIBCH</name>
<proteinExistence type="evidence at protein level"/>
<keyword id="KW-0260">Enterotoxin</keyword>
<keyword id="KW-1185">Reference proteome</keyword>
<keyword id="KW-0800">Toxin</keyword>
<keyword id="KW-0843">Virulence</keyword>
<feature type="chain" id="PRO_0000066592" description="Zona occludens toxin">
    <location>
        <begin position="1"/>
        <end position="399"/>
    </location>
</feature>
<feature type="sequence variant" description="In strain: 569B.">
    <original>M</original>
    <variation>I</variation>
    <location>
        <position position="45"/>
    </location>
</feature>
<feature type="sequence variant" description="In strain: 569B and 86015.">
    <original>V</original>
    <variation>A</variation>
    <location>
        <position position="100"/>
    </location>
</feature>
<feature type="sequence variant" description="In strain: 569B.">
    <original>V</original>
    <variation>A</variation>
    <location>
        <position position="272"/>
    </location>
</feature>
<feature type="sequence variant" description="In strain: 569B.">
    <original>V</original>
    <variation>A</variation>
    <location>
        <position position="281"/>
    </location>
</feature>
<feature type="sequence variant" description="In strain: 86015.">
    <original>A</original>
    <variation>S</variation>
    <location>
        <position position="349"/>
    </location>
</feature>
<feature type="sequence variant" description="In strain: 86015.">
    <original>K</original>
    <variation>R</variation>
    <location>
        <position position="381"/>
    </location>
</feature>
<feature type="sequence conflict" description="In Ref. 4." evidence="1" ref="4">
    <original>IKTENDKKGLNSIF</original>
    <variation>VKKEKEESIIKSFL</variation>
    <location>
        <begin position="386"/>
        <end position="399"/>
    </location>
</feature>
<comment type="function">
    <text>Increases the permeability of the small intestine mucosa by affecting the structure of intercellular tight junctions (zonula occludens).</text>
</comment>
<organism>
    <name type="scientific">Vibrio cholerae serotype O1 (strain ATCC 39315 / El Tor Inaba N16961)</name>
    <dbReference type="NCBI Taxonomy" id="243277"/>
    <lineage>
        <taxon>Bacteria</taxon>
        <taxon>Pseudomonadati</taxon>
        <taxon>Pseudomonadota</taxon>
        <taxon>Gammaproteobacteria</taxon>
        <taxon>Vibrionales</taxon>
        <taxon>Vibrionaceae</taxon>
        <taxon>Vibrio</taxon>
    </lineage>
</organism>
<gene>
    <name type="primary">zot</name>
    <name type="ordered locus">VC_1458</name>
</gene>
<dbReference type="EMBL" id="M83563">
    <property type="protein sequence ID" value="AAA27582.1"/>
    <property type="molecule type" value="Genomic_DNA"/>
</dbReference>
<dbReference type="EMBL" id="AF175708">
    <property type="protein sequence ID" value="AAD51358.1"/>
    <property type="molecule type" value="Genomic_DNA"/>
</dbReference>
<dbReference type="EMBL" id="AF123049">
    <property type="protein sequence ID" value="AAD26854.1"/>
    <property type="molecule type" value="Genomic_DNA"/>
</dbReference>
<dbReference type="EMBL" id="AF220606">
    <property type="protein sequence ID" value="AAF29547.1"/>
    <property type="molecule type" value="Genomic_DNA"/>
</dbReference>
<dbReference type="EMBL" id="AE003852">
    <property type="protein sequence ID" value="AAF94615.1"/>
    <property type="molecule type" value="Genomic_DNA"/>
</dbReference>
<dbReference type="PIR" id="A43864">
    <property type="entry name" value="A43864"/>
</dbReference>
<dbReference type="PIR" id="B82197">
    <property type="entry name" value="B82197"/>
</dbReference>
<dbReference type="RefSeq" id="NP_231101.1">
    <property type="nucleotide sequence ID" value="NC_002505.1"/>
</dbReference>
<dbReference type="RefSeq" id="WP_000021616.1">
    <property type="nucleotide sequence ID" value="NZ_LT906614.1"/>
</dbReference>
<dbReference type="STRING" id="243277.VC_1458"/>
<dbReference type="DNASU" id="2613964"/>
<dbReference type="EnsemblBacteria" id="AAF94615">
    <property type="protein sequence ID" value="AAF94615"/>
    <property type="gene ID" value="VC_1458"/>
</dbReference>
<dbReference type="KEGG" id="vch:VC_1458"/>
<dbReference type="PATRIC" id="fig|243277.26.peg.1388"/>
<dbReference type="eggNOG" id="COG4128">
    <property type="taxonomic scope" value="Bacteria"/>
</dbReference>
<dbReference type="HOGENOM" id="CLU_700097_0_0_6"/>
<dbReference type="Proteomes" id="UP000000584">
    <property type="component" value="Chromosome 1"/>
</dbReference>
<dbReference type="GO" id="GO:0090729">
    <property type="term" value="F:toxin activity"/>
    <property type="evidence" value="ECO:0007669"/>
    <property type="project" value="UniProtKB-KW"/>
</dbReference>
<dbReference type="Gene3D" id="3.40.50.300">
    <property type="entry name" value="P-loop containing nucleotide triphosphate hydrolases"/>
    <property type="match status" value="1"/>
</dbReference>
<dbReference type="InterPro" id="IPR027417">
    <property type="entry name" value="P-loop_NTPase"/>
</dbReference>
<dbReference type="InterPro" id="IPR008900">
    <property type="entry name" value="Zot_N"/>
</dbReference>
<dbReference type="Pfam" id="PF05707">
    <property type="entry name" value="Zot"/>
    <property type="match status" value="1"/>
</dbReference>
<evidence type="ECO:0000305" key="1"/>
<accession>P38442</accession>
<accession>Q9L7Q6</accession>
<accession>Q9R3V6</accession>
<reference key="1">
    <citation type="journal article" date="1992" name="Infect. Immun.">
        <title>Cloning of a gene (zot) encoding a new toxin produced by Vibrio cholerae.</title>
        <authorList>
            <person name="Baudry B."/>
            <person name="Fasano A."/>
            <person name="Ketley J."/>
            <person name="Kaper J.B."/>
        </authorList>
    </citation>
    <scope>NUCLEOTIDE SEQUENCE [GENOMIC DNA]</scope>
    <source>
        <strain>Classical Inaba 569B</strain>
    </source>
</reference>
<reference key="2">
    <citation type="journal article" date="1999" name="Misainmurhag Hoiji">
        <title>Cloning and nucleotide sequence analysis of the virulence gene cassette from Vibrio cholerae KNIH002 isolated in Korea.</title>
        <authorList>
            <person name="Shin H.J."/>
            <person name="Park Y.C."/>
            <person name="Kim Y.C."/>
        </authorList>
    </citation>
    <scope>NUCLEOTIDE SEQUENCE [GENOMIC DNA]</scope>
    <source>
        <strain>KNIH002</strain>
    </source>
</reference>
<reference key="3">
    <citation type="submission" date="1999-01" db="EMBL/GenBank/DDBJ databases">
        <title>Cloning and Expression of zot gene from Vibrio cholerae.</title>
        <authorList>
            <person name="Zhi-Yong H."/>
            <person name="Wei-Jie Z."/>
            <person name="Xiang-Fu W."/>
        </authorList>
    </citation>
    <scope>NUCLEOTIDE SEQUENCE [GENOMIC DNA]</scope>
    <source>
        <strain>O139-Tor Ogawa</strain>
    </source>
</reference>
<reference key="4">
    <citation type="submission" date="2000-01" db="EMBL/GenBank/DDBJ databases">
        <authorList>
            <person name="Kan B."/>
            <person name="Liu Y.Q."/>
            <person name="Qi G.M."/>
            <person name="Gao S.Y."/>
        </authorList>
    </citation>
    <scope>NUCLEOTIDE SEQUENCE [GENOMIC DNA]</scope>
    <source>
        <strain>El Tor 86015 / Serotype O1</strain>
    </source>
</reference>
<reference key="5">
    <citation type="journal article" date="2000" name="Nature">
        <title>DNA sequence of both chromosomes of the cholera pathogen Vibrio cholerae.</title>
        <authorList>
            <person name="Heidelberg J.F."/>
            <person name="Eisen J.A."/>
            <person name="Nelson W.C."/>
            <person name="Clayton R.A."/>
            <person name="Gwinn M.L."/>
            <person name="Dodson R.J."/>
            <person name="Haft D.H."/>
            <person name="Hickey E.K."/>
            <person name="Peterson J.D."/>
            <person name="Umayam L.A."/>
            <person name="Gill S.R."/>
            <person name="Nelson K.E."/>
            <person name="Read T.D."/>
            <person name="Tettelin H."/>
            <person name="Richardson D.L."/>
            <person name="Ermolaeva M.D."/>
            <person name="Vamathevan J.J."/>
            <person name="Bass S."/>
            <person name="Qin H."/>
            <person name="Dragoi I."/>
            <person name="Sellers P."/>
            <person name="McDonald L.A."/>
            <person name="Utterback T.R."/>
            <person name="Fleischmann R.D."/>
            <person name="Nierman W.C."/>
            <person name="White O."/>
            <person name="Salzberg S.L."/>
            <person name="Smith H.O."/>
            <person name="Colwell R.R."/>
            <person name="Mekalanos J.J."/>
            <person name="Venter J.C."/>
            <person name="Fraser C.M."/>
        </authorList>
    </citation>
    <scope>NUCLEOTIDE SEQUENCE [LARGE SCALE GENOMIC DNA]</scope>
    <source>
        <strain>ATCC 39315 / El Tor Inaba N16961</strain>
    </source>
</reference>
<reference key="6">
    <citation type="journal article" date="1991" name="Proc. Natl. Acad. Sci. U.S.A.">
        <title>Vibrio cholerae produces a second enterotoxin, which affects intestinal tight junctions.</title>
        <authorList>
            <person name="Fasano A."/>
            <person name="Baudry B."/>
            <person name="Pumplin D.W."/>
            <person name="Wasserman S.S."/>
            <person name="Tall B.D."/>
            <person name="Ketley J.M."/>
            <person name="Kaper J.B."/>
        </authorList>
    </citation>
    <scope>CHARACTERIZATION</scope>
</reference>
<sequence length="399" mass="44903">MSIFIHHGAPGSYKTSGALWLRLLPAIKSGRHIITNVRGLNLERMAKYLKMDVSDISIEFIDTDHPDGRLTMARFWHWARKDAFLFIDECGRIWPPRLTVTNLKALDTPPDLVAEDRPESFEVAFDMHRHHGWDICLTTPNIAKVHNMIREAAEIGYRHFNRATVGLGAKFTLTTHDAANSGQMDSHALTRQVKKIPSPIFKMYASTTTGKARDTMAGTALWKDRKILFLFGMVFLMFSYSFYGLHDNPIFTGGNDATIESEQSEPQSKATVGNAVGSKAVAPASFGFCIGRLCVQDGFVTVGDERYRLVDNLDIPYRGLWATGHHIYKDTLTVFFETESGSVPTELFASSYRYKVLPLPDFNHFVVFDTFAAQALWVEVKRGLPIKTENDKKGLNSIF</sequence>
<protein>
    <recommendedName>
        <fullName>Zona occludens toxin</fullName>
    </recommendedName>
    <alternativeName>
        <fullName>Zonular occludens toxin</fullName>
        <shortName>Zot</shortName>
    </alternativeName>
</protein>